<dbReference type="EMBL" id="BX950229">
    <property type="protein sequence ID" value="CAF30961.1"/>
    <property type="molecule type" value="Genomic_DNA"/>
</dbReference>
<dbReference type="SMR" id="Q6LXE6"/>
<dbReference type="STRING" id="267377.MMP1405"/>
<dbReference type="EnsemblBacteria" id="CAF30961">
    <property type="protein sequence ID" value="CAF30961"/>
    <property type="gene ID" value="MMP1405"/>
</dbReference>
<dbReference type="KEGG" id="mmp:MMP1405"/>
<dbReference type="PATRIC" id="fig|267377.15.peg.1441"/>
<dbReference type="eggNOG" id="arCOG00785">
    <property type="taxonomic scope" value="Archaea"/>
</dbReference>
<dbReference type="HOGENOM" id="CLU_158491_2_2_2"/>
<dbReference type="OrthoDB" id="11736at2157"/>
<dbReference type="Proteomes" id="UP000000590">
    <property type="component" value="Chromosome"/>
</dbReference>
<dbReference type="GO" id="GO:1990904">
    <property type="term" value="C:ribonucleoprotein complex"/>
    <property type="evidence" value="ECO:0007669"/>
    <property type="project" value="UniProtKB-KW"/>
</dbReference>
<dbReference type="GO" id="GO:0005840">
    <property type="term" value="C:ribosome"/>
    <property type="evidence" value="ECO:0007669"/>
    <property type="project" value="UniProtKB-KW"/>
</dbReference>
<dbReference type="GO" id="GO:0003735">
    <property type="term" value="F:structural constituent of ribosome"/>
    <property type="evidence" value="ECO:0007669"/>
    <property type="project" value="InterPro"/>
</dbReference>
<dbReference type="GO" id="GO:0006412">
    <property type="term" value="P:translation"/>
    <property type="evidence" value="ECO:0007669"/>
    <property type="project" value="UniProtKB-UniRule"/>
</dbReference>
<dbReference type="CDD" id="cd00427">
    <property type="entry name" value="Ribosomal_L29_HIP"/>
    <property type="match status" value="1"/>
</dbReference>
<dbReference type="FunFam" id="1.10.287.310:FF:000001">
    <property type="entry name" value="50S ribosomal protein L29"/>
    <property type="match status" value="1"/>
</dbReference>
<dbReference type="Gene3D" id="1.10.287.310">
    <property type="match status" value="1"/>
</dbReference>
<dbReference type="HAMAP" id="MF_00374">
    <property type="entry name" value="Ribosomal_uL29"/>
    <property type="match status" value="1"/>
</dbReference>
<dbReference type="InterPro" id="IPR001854">
    <property type="entry name" value="Ribosomal_uL29"/>
</dbReference>
<dbReference type="InterPro" id="IPR018254">
    <property type="entry name" value="Ribosomal_uL29_CS"/>
</dbReference>
<dbReference type="InterPro" id="IPR036049">
    <property type="entry name" value="Ribosomal_uL29_sf"/>
</dbReference>
<dbReference type="NCBIfam" id="TIGR00012">
    <property type="entry name" value="L29"/>
    <property type="match status" value="1"/>
</dbReference>
<dbReference type="Pfam" id="PF00831">
    <property type="entry name" value="Ribosomal_L29"/>
    <property type="match status" value="1"/>
</dbReference>
<dbReference type="SUPFAM" id="SSF46561">
    <property type="entry name" value="Ribosomal protein L29 (L29p)"/>
    <property type="match status" value="1"/>
</dbReference>
<dbReference type="PROSITE" id="PS00579">
    <property type="entry name" value="RIBOSOMAL_L29"/>
    <property type="match status" value="1"/>
</dbReference>
<accession>Q6LXE6</accession>
<feature type="chain" id="PRO_0000130514" description="Large ribosomal subunit protein uL29">
    <location>
        <begin position="1"/>
        <end position="71"/>
    </location>
</feature>
<feature type="region of interest" description="Disordered" evidence="2">
    <location>
        <begin position="32"/>
        <end position="51"/>
    </location>
</feature>
<organism>
    <name type="scientific">Methanococcus maripaludis (strain DSM 14266 / JCM 13030 / NBRC 101832 / S2 / LL)</name>
    <dbReference type="NCBI Taxonomy" id="267377"/>
    <lineage>
        <taxon>Archaea</taxon>
        <taxon>Methanobacteriati</taxon>
        <taxon>Methanobacteriota</taxon>
        <taxon>Methanomada group</taxon>
        <taxon>Methanococci</taxon>
        <taxon>Methanococcales</taxon>
        <taxon>Methanococcaceae</taxon>
        <taxon>Methanococcus</taxon>
    </lineage>
</organism>
<gene>
    <name evidence="1" type="primary">rpl29</name>
    <name type="ordered locus">MMP1405</name>
</gene>
<sequence length="71" mass="7784">MAILKASEIRELSVEEMKGKIAELKRELMKEGVNKSTGGAPSNPGKISETKRTIARILTIMKEKEAQAENA</sequence>
<reference key="1">
    <citation type="journal article" date="2004" name="J. Bacteriol.">
        <title>Complete genome sequence of the genetically tractable hydrogenotrophic methanogen Methanococcus maripaludis.</title>
        <authorList>
            <person name="Hendrickson E.L."/>
            <person name="Kaul R."/>
            <person name="Zhou Y."/>
            <person name="Bovee D."/>
            <person name="Chapman P."/>
            <person name="Chung J."/>
            <person name="Conway de Macario E."/>
            <person name="Dodsworth J.A."/>
            <person name="Gillett W."/>
            <person name="Graham D.E."/>
            <person name="Hackett M."/>
            <person name="Haydock A.K."/>
            <person name="Kang A."/>
            <person name="Land M.L."/>
            <person name="Levy R."/>
            <person name="Lie T.J."/>
            <person name="Major T.A."/>
            <person name="Moore B.C."/>
            <person name="Porat I."/>
            <person name="Palmeiri A."/>
            <person name="Rouse G."/>
            <person name="Saenphimmachak C."/>
            <person name="Soell D."/>
            <person name="Van Dien S."/>
            <person name="Wang T."/>
            <person name="Whitman W.B."/>
            <person name="Xia Q."/>
            <person name="Zhang Y."/>
            <person name="Larimer F.W."/>
            <person name="Olson M.V."/>
            <person name="Leigh J.A."/>
        </authorList>
    </citation>
    <scope>NUCLEOTIDE SEQUENCE [LARGE SCALE GENOMIC DNA]</scope>
    <source>
        <strain>DSM 14266 / JCM 13030 / NBRC 101832 / S2 / LL</strain>
    </source>
</reference>
<keyword id="KW-1185">Reference proteome</keyword>
<keyword id="KW-0687">Ribonucleoprotein</keyword>
<keyword id="KW-0689">Ribosomal protein</keyword>
<evidence type="ECO:0000255" key="1">
    <source>
        <dbReference type="HAMAP-Rule" id="MF_00374"/>
    </source>
</evidence>
<evidence type="ECO:0000256" key="2">
    <source>
        <dbReference type="SAM" id="MobiDB-lite"/>
    </source>
</evidence>
<evidence type="ECO:0000305" key="3"/>
<comment type="similarity">
    <text evidence="1">Belongs to the universal ribosomal protein uL29 family.</text>
</comment>
<proteinExistence type="inferred from homology"/>
<name>RL29_METMP</name>
<protein>
    <recommendedName>
        <fullName evidence="1">Large ribosomal subunit protein uL29</fullName>
    </recommendedName>
    <alternativeName>
        <fullName evidence="3">50S ribosomal protein L29</fullName>
    </alternativeName>
</protein>